<feature type="chain" id="PRO_0000084000" description="Chromosomal protein MC1b">
    <location>
        <begin position="1"/>
        <end position="87"/>
    </location>
</feature>
<sequence>AEMRNFALRDAQGNEIGVFTGKSPRQAALKAANRGYTEIKLRERGTKKVHIFSGERVQVDKPAGAPAWMPDKIWKPKVKKEGIEKLD</sequence>
<accession>P15250</accession>
<proteinExistence type="evidence at protein level"/>
<protein>
    <recommendedName>
        <fullName>Chromosomal protein MC1b</fullName>
    </recommendedName>
</protein>
<organism>
    <name type="scientific">Methanothrix soehngenii</name>
    <name type="common">Methanosaeta concilii</name>
    <dbReference type="NCBI Taxonomy" id="2223"/>
    <lineage>
        <taxon>Archaea</taxon>
        <taxon>Methanobacteriati</taxon>
        <taxon>Methanobacteriota</taxon>
        <taxon>Stenosarchaea group</taxon>
        <taxon>Methanomicrobia</taxon>
        <taxon>Methanotrichales</taxon>
        <taxon>Methanotrichaceae</taxon>
        <taxon>Methanothrix</taxon>
    </lineage>
</organism>
<reference key="1">
    <citation type="journal article" date="1989" name="J. Biol. Chem.">
        <title>Primary structure of the chromosomal proteins MC1a, MC1b, and MC1c from the archaebacterium Methanothrix soehngenii.</title>
        <authorList>
            <person name="Chartier F."/>
            <person name="Laine B."/>
            <person name="Belaiche D."/>
            <person name="Sautiere P."/>
        </authorList>
    </citation>
    <scope>PROTEIN SEQUENCE</scope>
</reference>
<keyword id="KW-0903">Direct protein sequencing</keyword>
<keyword id="KW-0238">DNA-binding</keyword>
<dbReference type="PIR" id="B34455">
    <property type="entry name" value="B34455"/>
</dbReference>
<dbReference type="SMR" id="P15250"/>
<dbReference type="OMA" id="IHVFKAW"/>
<dbReference type="GO" id="GO:0003677">
    <property type="term" value="F:DNA binding"/>
    <property type="evidence" value="ECO:0007669"/>
    <property type="project" value="UniProtKB-KW"/>
</dbReference>
<dbReference type="GO" id="GO:0042262">
    <property type="term" value="P:DNA protection"/>
    <property type="evidence" value="ECO:0007669"/>
    <property type="project" value="InterPro"/>
</dbReference>
<dbReference type="Gene3D" id="3.10.470.10">
    <property type="entry name" value="Chromosomal protein MC1"/>
    <property type="match status" value="1"/>
</dbReference>
<dbReference type="InterPro" id="IPR008674">
    <property type="entry name" value="MC1"/>
</dbReference>
<dbReference type="InterPro" id="IPR036620">
    <property type="entry name" value="MC1_sf"/>
</dbReference>
<dbReference type="Pfam" id="PF05854">
    <property type="entry name" value="MC1"/>
    <property type="match status" value="1"/>
</dbReference>
<dbReference type="SUPFAM" id="SSF102875">
    <property type="entry name" value="Chromosomal protein MC1"/>
    <property type="match status" value="1"/>
</dbReference>
<comment type="function">
    <text>Protects DNA against thermal denaturation and modulates transcription.</text>
</comment>
<name>HMC1B_METSH</name>